<proteinExistence type="inferred from homology"/>
<feature type="chain" id="PRO_0000224990" description="Small ribosomal subunit protein bS20">
    <location>
        <begin position="1"/>
        <end position="92"/>
    </location>
</feature>
<feature type="region of interest" description="Disordered" evidence="2">
    <location>
        <begin position="1"/>
        <end position="22"/>
    </location>
</feature>
<feature type="compositionally biased region" description="Basic residues" evidence="2">
    <location>
        <begin position="1"/>
        <end position="11"/>
    </location>
</feature>
<comment type="function">
    <text evidence="1">Binds directly to 16S ribosomal RNA.</text>
</comment>
<comment type="similarity">
    <text evidence="1">Belongs to the bacterial ribosomal protein bS20 family.</text>
</comment>
<name>RS20_THEFY</name>
<protein>
    <recommendedName>
        <fullName evidence="1">Small ribosomal subunit protein bS20</fullName>
    </recommendedName>
    <alternativeName>
        <fullName evidence="3">30S ribosomal protein S20</fullName>
    </alternativeName>
</protein>
<accession>Q47RQ2</accession>
<organism>
    <name type="scientific">Thermobifida fusca (strain YX)</name>
    <dbReference type="NCBI Taxonomy" id="269800"/>
    <lineage>
        <taxon>Bacteria</taxon>
        <taxon>Bacillati</taxon>
        <taxon>Actinomycetota</taxon>
        <taxon>Actinomycetes</taxon>
        <taxon>Streptosporangiales</taxon>
        <taxon>Nocardiopsidaceae</taxon>
        <taxon>Thermobifida</taxon>
    </lineage>
</organism>
<gene>
    <name evidence="1" type="primary">rpsT</name>
    <name type="ordered locus">Tfu_0827</name>
</gene>
<evidence type="ECO:0000255" key="1">
    <source>
        <dbReference type="HAMAP-Rule" id="MF_00500"/>
    </source>
</evidence>
<evidence type="ECO:0000256" key="2">
    <source>
        <dbReference type="SAM" id="MobiDB-lite"/>
    </source>
</evidence>
<evidence type="ECO:0000305" key="3"/>
<dbReference type="EMBL" id="CP000088">
    <property type="protein sequence ID" value="AAZ54865.1"/>
    <property type="molecule type" value="Genomic_DNA"/>
</dbReference>
<dbReference type="RefSeq" id="WP_011291274.1">
    <property type="nucleotide sequence ID" value="NC_007333.1"/>
</dbReference>
<dbReference type="SMR" id="Q47RQ2"/>
<dbReference type="STRING" id="269800.Tfu_0827"/>
<dbReference type="KEGG" id="tfu:Tfu_0827"/>
<dbReference type="eggNOG" id="COG0268">
    <property type="taxonomic scope" value="Bacteria"/>
</dbReference>
<dbReference type="HOGENOM" id="CLU_160655_0_1_11"/>
<dbReference type="OrthoDB" id="9807974at2"/>
<dbReference type="GO" id="GO:0005829">
    <property type="term" value="C:cytosol"/>
    <property type="evidence" value="ECO:0007669"/>
    <property type="project" value="TreeGrafter"/>
</dbReference>
<dbReference type="GO" id="GO:0015935">
    <property type="term" value="C:small ribosomal subunit"/>
    <property type="evidence" value="ECO:0007669"/>
    <property type="project" value="TreeGrafter"/>
</dbReference>
<dbReference type="GO" id="GO:0070181">
    <property type="term" value="F:small ribosomal subunit rRNA binding"/>
    <property type="evidence" value="ECO:0007669"/>
    <property type="project" value="TreeGrafter"/>
</dbReference>
<dbReference type="GO" id="GO:0003735">
    <property type="term" value="F:structural constituent of ribosome"/>
    <property type="evidence" value="ECO:0007669"/>
    <property type="project" value="InterPro"/>
</dbReference>
<dbReference type="GO" id="GO:0006412">
    <property type="term" value="P:translation"/>
    <property type="evidence" value="ECO:0007669"/>
    <property type="project" value="UniProtKB-UniRule"/>
</dbReference>
<dbReference type="FunFam" id="1.20.58.110:FF:000001">
    <property type="entry name" value="30S ribosomal protein S20"/>
    <property type="match status" value="1"/>
</dbReference>
<dbReference type="Gene3D" id="1.20.58.110">
    <property type="entry name" value="Ribosomal protein S20"/>
    <property type="match status" value="1"/>
</dbReference>
<dbReference type="HAMAP" id="MF_00500">
    <property type="entry name" value="Ribosomal_bS20"/>
    <property type="match status" value="1"/>
</dbReference>
<dbReference type="InterPro" id="IPR002583">
    <property type="entry name" value="Ribosomal_bS20"/>
</dbReference>
<dbReference type="InterPro" id="IPR036510">
    <property type="entry name" value="Ribosomal_bS20_sf"/>
</dbReference>
<dbReference type="NCBIfam" id="TIGR00029">
    <property type="entry name" value="S20"/>
    <property type="match status" value="1"/>
</dbReference>
<dbReference type="PANTHER" id="PTHR33398">
    <property type="entry name" value="30S RIBOSOMAL PROTEIN S20"/>
    <property type="match status" value="1"/>
</dbReference>
<dbReference type="PANTHER" id="PTHR33398:SF1">
    <property type="entry name" value="SMALL RIBOSOMAL SUBUNIT PROTEIN BS20C"/>
    <property type="match status" value="1"/>
</dbReference>
<dbReference type="Pfam" id="PF01649">
    <property type="entry name" value="Ribosomal_S20p"/>
    <property type="match status" value="1"/>
</dbReference>
<dbReference type="SUPFAM" id="SSF46992">
    <property type="entry name" value="Ribosomal protein S20"/>
    <property type="match status" value="1"/>
</dbReference>
<reference key="1">
    <citation type="journal article" date="2007" name="J. Bacteriol.">
        <title>Genome sequence and analysis of the soil cellulolytic actinomycete Thermobifida fusca YX.</title>
        <authorList>
            <person name="Lykidis A."/>
            <person name="Mavromatis K."/>
            <person name="Ivanova N."/>
            <person name="Anderson I."/>
            <person name="Land M."/>
            <person name="DiBartolo G."/>
            <person name="Martinez M."/>
            <person name="Lapidus A."/>
            <person name="Lucas S."/>
            <person name="Copeland A."/>
            <person name="Richardson P."/>
            <person name="Wilson D.B."/>
            <person name="Kyrpides N."/>
        </authorList>
    </citation>
    <scope>NUCLEOTIDE SEQUENCE [LARGE SCALE GENOMIC DNA]</scope>
    <source>
        <strain>YX</strain>
    </source>
</reference>
<sequence length="92" mass="10282">MANIKSQKKRIRQNEKARLRNKAVKSSLKTAIRKFREAAEAGNVEEAIILQRAAARQLDKAVSKGVIHKNQAANRKSAIAKRLHQLQQSQAA</sequence>
<keyword id="KW-0687">Ribonucleoprotein</keyword>
<keyword id="KW-0689">Ribosomal protein</keyword>
<keyword id="KW-0694">RNA-binding</keyword>
<keyword id="KW-0699">rRNA-binding</keyword>